<feature type="chain" id="PRO_0000292794" description="UPF0346 protein LSEI_1394">
    <location>
        <begin position="1"/>
        <end position="80"/>
    </location>
</feature>
<name>Y1394_LACP3</name>
<protein>
    <recommendedName>
        <fullName evidence="1">UPF0346 protein LSEI_1394</fullName>
    </recommendedName>
</protein>
<sequence length="80" mass="9459">MHRTFYEYLMTLRNPNDHSEIAEFAKNAFLDQSFPKQEKDYHRLSDYLELNGNYLPSMAVFDETYRAYEASESTGGDSYQ</sequence>
<gene>
    <name type="ordered locus">LSEI_1394</name>
</gene>
<organism>
    <name type="scientific">Lacticaseibacillus paracasei (strain ATCC 334 / BCRC 17002 / CCUG 31169 / CIP 107868 / KCTC 3260 / NRRL B-441)</name>
    <name type="common">Lactobacillus paracasei</name>
    <dbReference type="NCBI Taxonomy" id="321967"/>
    <lineage>
        <taxon>Bacteria</taxon>
        <taxon>Bacillati</taxon>
        <taxon>Bacillota</taxon>
        <taxon>Bacilli</taxon>
        <taxon>Lactobacillales</taxon>
        <taxon>Lactobacillaceae</taxon>
        <taxon>Lacticaseibacillus</taxon>
    </lineage>
</organism>
<proteinExistence type="inferred from homology"/>
<accession>Q039F0</accession>
<reference key="1">
    <citation type="journal article" date="2006" name="Proc. Natl. Acad. Sci. U.S.A.">
        <title>Comparative genomics of the lactic acid bacteria.</title>
        <authorList>
            <person name="Makarova K.S."/>
            <person name="Slesarev A."/>
            <person name="Wolf Y.I."/>
            <person name="Sorokin A."/>
            <person name="Mirkin B."/>
            <person name="Koonin E.V."/>
            <person name="Pavlov A."/>
            <person name="Pavlova N."/>
            <person name="Karamychev V."/>
            <person name="Polouchine N."/>
            <person name="Shakhova V."/>
            <person name="Grigoriev I."/>
            <person name="Lou Y."/>
            <person name="Rohksar D."/>
            <person name="Lucas S."/>
            <person name="Huang K."/>
            <person name="Goodstein D.M."/>
            <person name="Hawkins T."/>
            <person name="Plengvidhya V."/>
            <person name="Welker D."/>
            <person name="Hughes J."/>
            <person name="Goh Y."/>
            <person name="Benson A."/>
            <person name="Baldwin K."/>
            <person name="Lee J.-H."/>
            <person name="Diaz-Muniz I."/>
            <person name="Dosti B."/>
            <person name="Smeianov V."/>
            <person name="Wechter W."/>
            <person name="Barabote R."/>
            <person name="Lorca G."/>
            <person name="Altermann E."/>
            <person name="Barrangou R."/>
            <person name="Ganesan B."/>
            <person name="Xie Y."/>
            <person name="Rawsthorne H."/>
            <person name="Tamir D."/>
            <person name="Parker C."/>
            <person name="Breidt F."/>
            <person name="Broadbent J.R."/>
            <person name="Hutkins R."/>
            <person name="O'Sullivan D."/>
            <person name="Steele J."/>
            <person name="Unlu G."/>
            <person name="Saier M.H. Jr."/>
            <person name="Klaenhammer T."/>
            <person name="Richardson P."/>
            <person name="Kozyavkin S."/>
            <person name="Weimer B.C."/>
            <person name="Mills D.A."/>
        </authorList>
    </citation>
    <scope>NUCLEOTIDE SEQUENCE [LARGE SCALE GENOMIC DNA]</scope>
    <source>
        <strain>ATCC 334 / BCRC 17002 / CCUG 31169 / CIP 107868 / KCTC 3260 / NRRL B-441</strain>
    </source>
</reference>
<evidence type="ECO:0000255" key="1">
    <source>
        <dbReference type="HAMAP-Rule" id="MF_01538"/>
    </source>
</evidence>
<comment type="similarity">
    <text evidence="1">Belongs to the UPF0346 family.</text>
</comment>
<dbReference type="EMBL" id="CP000423">
    <property type="protein sequence ID" value="ABJ70172.1"/>
    <property type="molecule type" value="Genomic_DNA"/>
</dbReference>
<dbReference type="RefSeq" id="WP_003565389.1">
    <property type="nucleotide sequence ID" value="NC_008526.1"/>
</dbReference>
<dbReference type="RefSeq" id="YP_806614.1">
    <property type="nucleotide sequence ID" value="NC_008526.1"/>
</dbReference>
<dbReference type="SMR" id="Q039F0"/>
<dbReference type="STRING" id="321967.LSEI_1394"/>
<dbReference type="PaxDb" id="321967-LSEI_1394"/>
<dbReference type="KEGG" id="lca:LSEI_1394"/>
<dbReference type="PATRIC" id="fig|321967.11.peg.1373"/>
<dbReference type="HOGENOM" id="CLU_177534_1_0_9"/>
<dbReference type="Proteomes" id="UP000001651">
    <property type="component" value="Chromosome"/>
</dbReference>
<dbReference type="Gene3D" id="1.10.150.260">
    <property type="entry name" value="YozE SAM-like"/>
    <property type="match status" value="1"/>
</dbReference>
<dbReference type="HAMAP" id="MF_01538">
    <property type="entry name" value="UPF0346"/>
    <property type="match status" value="1"/>
</dbReference>
<dbReference type="InterPro" id="IPR010673">
    <property type="entry name" value="UPF0346"/>
</dbReference>
<dbReference type="InterPro" id="IPR023089">
    <property type="entry name" value="YozE_SAM-like"/>
</dbReference>
<dbReference type="InterPro" id="IPR036806">
    <property type="entry name" value="YozE_SAM-like_sf"/>
</dbReference>
<dbReference type="NCBIfam" id="NF010193">
    <property type="entry name" value="PRK13672.1"/>
    <property type="match status" value="1"/>
</dbReference>
<dbReference type="Pfam" id="PF06855">
    <property type="entry name" value="YozE_SAM_like"/>
    <property type="match status" value="1"/>
</dbReference>
<dbReference type="PIRSF" id="PIRSF037262">
    <property type="entry name" value="UCP037262"/>
    <property type="match status" value="1"/>
</dbReference>
<dbReference type="SUPFAM" id="SSF140652">
    <property type="entry name" value="YozE-like"/>
    <property type="match status" value="1"/>
</dbReference>
<keyword id="KW-1185">Reference proteome</keyword>